<sequence>MTEQALLTDARLYLCTDARTDRGDFADFVDAAYAGGVDIIQLRDKGLEAAEELELLEVLETAARRHGRLWSVNDRADIASLSGAPVLHVGQKDLPLASARKFLGGEAVIGLSTHSHGQIDAAIAASRGAGGLDYFCVGPVWATPTKPGRAAVGLELVRYAAEAAGKTTAKTTGGAAGPTVDGPRLPWFAIGGIDLGNVEQVAAAGAERIVVVRAITEADDPAAAARSLLAALDAGAS</sequence>
<organism>
    <name type="scientific">Arthrobacter sp. (strain FB24)</name>
    <dbReference type="NCBI Taxonomy" id="290399"/>
    <lineage>
        <taxon>Bacteria</taxon>
        <taxon>Bacillati</taxon>
        <taxon>Actinomycetota</taxon>
        <taxon>Actinomycetes</taxon>
        <taxon>Micrococcales</taxon>
        <taxon>Micrococcaceae</taxon>
        <taxon>Arthrobacter</taxon>
    </lineage>
</organism>
<proteinExistence type="inferred from homology"/>
<accession>A0JYP1</accession>
<protein>
    <recommendedName>
        <fullName evidence="1">Thiamine-phosphate synthase</fullName>
        <shortName evidence="1">TP synthase</shortName>
        <shortName evidence="1">TPS</shortName>
        <ecNumber evidence="1">2.5.1.3</ecNumber>
    </recommendedName>
    <alternativeName>
        <fullName evidence="1">Thiamine-phosphate pyrophosphorylase</fullName>
        <shortName evidence="1">TMP pyrophosphorylase</shortName>
        <shortName evidence="1">TMP-PPase</shortName>
    </alternativeName>
</protein>
<reference key="1">
    <citation type="journal article" date="2013" name="Stand. Genomic Sci.">
        <title>Complete genome sequence of Arthrobacter sp. strain FB24.</title>
        <authorList>
            <person name="Nakatsu C.H."/>
            <person name="Barabote R."/>
            <person name="Thompson S."/>
            <person name="Bruce D."/>
            <person name="Detter C."/>
            <person name="Brettin T."/>
            <person name="Han C."/>
            <person name="Beasley F."/>
            <person name="Chen W."/>
            <person name="Konopka A."/>
            <person name="Xie G."/>
        </authorList>
    </citation>
    <scope>NUCLEOTIDE SEQUENCE [LARGE SCALE GENOMIC DNA]</scope>
    <source>
        <strain>FB24</strain>
    </source>
</reference>
<dbReference type="EC" id="2.5.1.3" evidence="1"/>
<dbReference type="EMBL" id="CP000454">
    <property type="protein sequence ID" value="ABK04161.1"/>
    <property type="molecule type" value="Genomic_DNA"/>
</dbReference>
<dbReference type="RefSeq" id="WP_011692622.1">
    <property type="nucleotide sequence ID" value="NC_008541.1"/>
</dbReference>
<dbReference type="SMR" id="A0JYP1"/>
<dbReference type="STRING" id="290399.Arth_2782"/>
<dbReference type="KEGG" id="art:Arth_2782"/>
<dbReference type="eggNOG" id="COG0352">
    <property type="taxonomic scope" value="Bacteria"/>
</dbReference>
<dbReference type="HOGENOM" id="CLU_018272_3_0_11"/>
<dbReference type="OrthoDB" id="3243336at2"/>
<dbReference type="UniPathway" id="UPA00060">
    <property type="reaction ID" value="UER00141"/>
</dbReference>
<dbReference type="Proteomes" id="UP000000754">
    <property type="component" value="Chromosome"/>
</dbReference>
<dbReference type="GO" id="GO:0005737">
    <property type="term" value="C:cytoplasm"/>
    <property type="evidence" value="ECO:0007669"/>
    <property type="project" value="TreeGrafter"/>
</dbReference>
<dbReference type="GO" id="GO:0000287">
    <property type="term" value="F:magnesium ion binding"/>
    <property type="evidence" value="ECO:0007669"/>
    <property type="project" value="UniProtKB-UniRule"/>
</dbReference>
<dbReference type="GO" id="GO:0004789">
    <property type="term" value="F:thiamine-phosphate diphosphorylase activity"/>
    <property type="evidence" value="ECO:0007669"/>
    <property type="project" value="UniProtKB-UniRule"/>
</dbReference>
<dbReference type="GO" id="GO:0009228">
    <property type="term" value="P:thiamine biosynthetic process"/>
    <property type="evidence" value="ECO:0007669"/>
    <property type="project" value="UniProtKB-KW"/>
</dbReference>
<dbReference type="GO" id="GO:0009229">
    <property type="term" value="P:thiamine diphosphate biosynthetic process"/>
    <property type="evidence" value="ECO:0007669"/>
    <property type="project" value="UniProtKB-UniRule"/>
</dbReference>
<dbReference type="CDD" id="cd00564">
    <property type="entry name" value="TMP_TenI"/>
    <property type="match status" value="1"/>
</dbReference>
<dbReference type="Gene3D" id="3.20.20.70">
    <property type="entry name" value="Aldolase class I"/>
    <property type="match status" value="1"/>
</dbReference>
<dbReference type="HAMAP" id="MF_00097">
    <property type="entry name" value="TMP_synthase"/>
    <property type="match status" value="1"/>
</dbReference>
<dbReference type="InterPro" id="IPR013785">
    <property type="entry name" value="Aldolase_TIM"/>
</dbReference>
<dbReference type="InterPro" id="IPR036206">
    <property type="entry name" value="ThiamineP_synth_sf"/>
</dbReference>
<dbReference type="InterPro" id="IPR022998">
    <property type="entry name" value="ThiamineP_synth_TenI"/>
</dbReference>
<dbReference type="InterPro" id="IPR034291">
    <property type="entry name" value="TMP_synthase"/>
</dbReference>
<dbReference type="NCBIfam" id="TIGR00693">
    <property type="entry name" value="thiE"/>
    <property type="match status" value="1"/>
</dbReference>
<dbReference type="PANTHER" id="PTHR20857">
    <property type="entry name" value="THIAMINE-PHOSPHATE PYROPHOSPHORYLASE"/>
    <property type="match status" value="1"/>
</dbReference>
<dbReference type="PANTHER" id="PTHR20857:SF15">
    <property type="entry name" value="THIAMINE-PHOSPHATE SYNTHASE"/>
    <property type="match status" value="1"/>
</dbReference>
<dbReference type="Pfam" id="PF02581">
    <property type="entry name" value="TMP-TENI"/>
    <property type="match status" value="1"/>
</dbReference>
<dbReference type="SUPFAM" id="SSF51391">
    <property type="entry name" value="Thiamin phosphate synthase"/>
    <property type="match status" value="1"/>
</dbReference>
<gene>
    <name evidence="1" type="primary">thiE</name>
    <name type="ordered locus">Arth_2782</name>
</gene>
<name>THIE_ARTS2</name>
<evidence type="ECO:0000255" key="1">
    <source>
        <dbReference type="HAMAP-Rule" id="MF_00097"/>
    </source>
</evidence>
<feature type="chain" id="PRO_0000336373" description="Thiamine-phosphate synthase">
    <location>
        <begin position="1"/>
        <end position="237"/>
    </location>
</feature>
<feature type="binding site" evidence="1">
    <location>
        <begin position="41"/>
        <end position="45"/>
    </location>
    <ligand>
        <name>4-amino-2-methyl-5-(diphosphooxymethyl)pyrimidine</name>
        <dbReference type="ChEBI" id="CHEBI:57841"/>
    </ligand>
</feature>
<feature type="binding site" evidence="1">
    <location>
        <position position="73"/>
    </location>
    <ligand>
        <name>4-amino-2-methyl-5-(diphosphooxymethyl)pyrimidine</name>
        <dbReference type="ChEBI" id="CHEBI:57841"/>
    </ligand>
</feature>
<feature type="binding site" evidence="1">
    <location>
        <position position="74"/>
    </location>
    <ligand>
        <name>Mg(2+)</name>
        <dbReference type="ChEBI" id="CHEBI:18420"/>
    </ligand>
</feature>
<feature type="binding site" evidence="1">
    <location>
        <position position="93"/>
    </location>
    <ligand>
        <name>Mg(2+)</name>
        <dbReference type="ChEBI" id="CHEBI:18420"/>
    </ligand>
</feature>
<feature type="binding site" evidence="1">
    <location>
        <position position="112"/>
    </location>
    <ligand>
        <name>4-amino-2-methyl-5-(diphosphooxymethyl)pyrimidine</name>
        <dbReference type="ChEBI" id="CHEBI:57841"/>
    </ligand>
</feature>
<feature type="binding site" evidence="1">
    <location>
        <begin position="143"/>
        <end position="145"/>
    </location>
    <ligand>
        <name>2-[(2R,5Z)-2-carboxy-4-methylthiazol-5(2H)-ylidene]ethyl phosphate</name>
        <dbReference type="ChEBI" id="CHEBI:62899"/>
    </ligand>
</feature>
<feature type="binding site" evidence="1">
    <location>
        <position position="146"/>
    </location>
    <ligand>
        <name>4-amino-2-methyl-5-(diphosphooxymethyl)pyrimidine</name>
        <dbReference type="ChEBI" id="CHEBI:57841"/>
    </ligand>
</feature>
<feature type="binding site" evidence="1">
    <location>
        <position position="192"/>
    </location>
    <ligand>
        <name>2-[(2R,5Z)-2-carboxy-4-methylthiazol-5(2H)-ylidene]ethyl phosphate</name>
        <dbReference type="ChEBI" id="CHEBI:62899"/>
    </ligand>
</feature>
<keyword id="KW-0460">Magnesium</keyword>
<keyword id="KW-0479">Metal-binding</keyword>
<keyword id="KW-1185">Reference proteome</keyword>
<keyword id="KW-0784">Thiamine biosynthesis</keyword>
<keyword id="KW-0808">Transferase</keyword>
<comment type="function">
    <text evidence="1">Condenses 4-methyl-5-(beta-hydroxyethyl)thiazole monophosphate (THZ-P) and 2-methyl-4-amino-5-hydroxymethyl pyrimidine pyrophosphate (HMP-PP) to form thiamine monophosphate (TMP).</text>
</comment>
<comment type="catalytic activity">
    <reaction evidence="1">
        <text>2-[(2R,5Z)-2-carboxy-4-methylthiazol-5(2H)-ylidene]ethyl phosphate + 4-amino-2-methyl-5-(diphosphooxymethyl)pyrimidine + 2 H(+) = thiamine phosphate + CO2 + diphosphate</text>
        <dbReference type="Rhea" id="RHEA:47844"/>
        <dbReference type="ChEBI" id="CHEBI:15378"/>
        <dbReference type="ChEBI" id="CHEBI:16526"/>
        <dbReference type="ChEBI" id="CHEBI:33019"/>
        <dbReference type="ChEBI" id="CHEBI:37575"/>
        <dbReference type="ChEBI" id="CHEBI:57841"/>
        <dbReference type="ChEBI" id="CHEBI:62899"/>
        <dbReference type="EC" id="2.5.1.3"/>
    </reaction>
</comment>
<comment type="catalytic activity">
    <reaction evidence="1">
        <text>2-(2-carboxy-4-methylthiazol-5-yl)ethyl phosphate + 4-amino-2-methyl-5-(diphosphooxymethyl)pyrimidine + 2 H(+) = thiamine phosphate + CO2 + diphosphate</text>
        <dbReference type="Rhea" id="RHEA:47848"/>
        <dbReference type="ChEBI" id="CHEBI:15378"/>
        <dbReference type="ChEBI" id="CHEBI:16526"/>
        <dbReference type="ChEBI" id="CHEBI:33019"/>
        <dbReference type="ChEBI" id="CHEBI:37575"/>
        <dbReference type="ChEBI" id="CHEBI:57841"/>
        <dbReference type="ChEBI" id="CHEBI:62890"/>
        <dbReference type="EC" id="2.5.1.3"/>
    </reaction>
</comment>
<comment type="catalytic activity">
    <reaction evidence="1">
        <text>4-methyl-5-(2-phosphooxyethyl)-thiazole + 4-amino-2-methyl-5-(diphosphooxymethyl)pyrimidine + H(+) = thiamine phosphate + diphosphate</text>
        <dbReference type="Rhea" id="RHEA:22328"/>
        <dbReference type="ChEBI" id="CHEBI:15378"/>
        <dbReference type="ChEBI" id="CHEBI:33019"/>
        <dbReference type="ChEBI" id="CHEBI:37575"/>
        <dbReference type="ChEBI" id="CHEBI:57841"/>
        <dbReference type="ChEBI" id="CHEBI:58296"/>
        <dbReference type="EC" id="2.5.1.3"/>
    </reaction>
</comment>
<comment type="cofactor">
    <cofactor evidence="1">
        <name>Mg(2+)</name>
        <dbReference type="ChEBI" id="CHEBI:18420"/>
    </cofactor>
    <text evidence="1">Binds 1 Mg(2+) ion per subunit.</text>
</comment>
<comment type="pathway">
    <text evidence="1">Cofactor biosynthesis; thiamine diphosphate biosynthesis; thiamine phosphate from 4-amino-2-methyl-5-diphosphomethylpyrimidine and 4-methyl-5-(2-phosphoethyl)-thiazole: step 1/1.</text>
</comment>
<comment type="similarity">
    <text evidence="1">Belongs to the thiamine-phosphate synthase family.</text>
</comment>